<feature type="chain" id="PRO_0000291209" description="Tetraacyldisaccharide 4'-kinase">
    <location>
        <begin position="1"/>
        <end position="312"/>
    </location>
</feature>
<feature type="binding site" evidence="1">
    <location>
        <begin position="60"/>
        <end position="67"/>
    </location>
    <ligand>
        <name>ATP</name>
        <dbReference type="ChEBI" id="CHEBI:30616"/>
    </ligand>
</feature>
<protein>
    <recommendedName>
        <fullName evidence="1">Tetraacyldisaccharide 4'-kinase</fullName>
        <ecNumber evidence="1">2.7.1.130</ecNumber>
    </recommendedName>
    <alternativeName>
        <fullName evidence="1">Lipid A 4'-kinase</fullName>
    </alternativeName>
</protein>
<organism>
    <name type="scientific">Helicobacter acinonychis (strain Sheeba)</name>
    <dbReference type="NCBI Taxonomy" id="382638"/>
    <lineage>
        <taxon>Bacteria</taxon>
        <taxon>Pseudomonadati</taxon>
        <taxon>Campylobacterota</taxon>
        <taxon>Epsilonproteobacteria</taxon>
        <taxon>Campylobacterales</taxon>
        <taxon>Helicobacteraceae</taxon>
        <taxon>Helicobacter</taxon>
    </lineage>
</organism>
<proteinExistence type="inferred from homology"/>
<dbReference type="EC" id="2.7.1.130" evidence="1"/>
<dbReference type="EMBL" id="AM260522">
    <property type="protein sequence ID" value="CAJ99762.1"/>
    <property type="molecule type" value="Genomic_DNA"/>
</dbReference>
<dbReference type="RefSeq" id="WP_011577872.1">
    <property type="nucleotide sequence ID" value="NC_008229.1"/>
</dbReference>
<dbReference type="SMR" id="Q17X64"/>
<dbReference type="STRING" id="382638.Hac_0992"/>
<dbReference type="GeneID" id="31758374"/>
<dbReference type="KEGG" id="hac:Hac_0992"/>
<dbReference type="eggNOG" id="COG1663">
    <property type="taxonomic scope" value="Bacteria"/>
</dbReference>
<dbReference type="HOGENOM" id="CLU_038816_1_0_7"/>
<dbReference type="OrthoDB" id="9766423at2"/>
<dbReference type="BioCyc" id="HACI382638:HAC_RS04265-MONOMER"/>
<dbReference type="UniPathway" id="UPA00359">
    <property type="reaction ID" value="UER00482"/>
</dbReference>
<dbReference type="Proteomes" id="UP000000775">
    <property type="component" value="Chromosome"/>
</dbReference>
<dbReference type="GO" id="GO:0005886">
    <property type="term" value="C:plasma membrane"/>
    <property type="evidence" value="ECO:0007669"/>
    <property type="project" value="TreeGrafter"/>
</dbReference>
<dbReference type="GO" id="GO:0005524">
    <property type="term" value="F:ATP binding"/>
    <property type="evidence" value="ECO:0007669"/>
    <property type="project" value="UniProtKB-UniRule"/>
</dbReference>
<dbReference type="GO" id="GO:0009029">
    <property type="term" value="F:tetraacyldisaccharide 4'-kinase activity"/>
    <property type="evidence" value="ECO:0007669"/>
    <property type="project" value="UniProtKB-UniRule"/>
</dbReference>
<dbReference type="GO" id="GO:0009245">
    <property type="term" value="P:lipid A biosynthetic process"/>
    <property type="evidence" value="ECO:0007669"/>
    <property type="project" value="UniProtKB-UniRule"/>
</dbReference>
<dbReference type="GO" id="GO:0009244">
    <property type="term" value="P:lipopolysaccharide core region biosynthetic process"/>
    <property type="evidence" value="ECO:0007669"/>
    <property type="project" value="TreeGrafter"/>
</dbReference>
<dbReference type="HAMAP" id="MF_00409">
    <property type="entry name" value="LpxK"/>
    <property type="match status" value="1"/>
</dbReference>
<dbReference type="InterPro" id="IPR003758">
    <property type="entry name" value="LpxK"/>
</dbReference>
<dbReference type="NCBIfam" id="TIGR00682">
    <property type="entry name" value="lpxK"/>
    <property type="match status" value="1"/>
</dbReference>
<dbReference type="NCBIfam" id="NF001892">
    <property type="entry name" value="PRK00652.1-5"/>
    <property type="match status" value="1"/>
</dbReference>
<dbReference type="PANTHER" id="PTHR42724">
    <property type="entry name" value="TETRAACYLDISACCHARIDE 4'-KINASE"/>
    <property type="match status" value="1"/>
</dbReference>
<dbReference type="PANTHER" id="PTHR42724:SF1">
    <property type="entry name" value="TETRAACYLDISACCHARIDE 4'-KINASE, MITOCHONDRIAL-RELATED"/>
    <property type="match status" value="1"/>
</dbReference>
<dbReference type="Pfam" id="PF02606">
    <property type="entry name" value="LpxK"/>
    <property type="match status" value="1"/>
</dbReference>
<comment type="function">
    <text evidence="1">Transfers the gamma-phosphate of ATP to the 4'-position of a tetraacyldisaccharide 1-phosphate intermediate (termed DS-1-P) to form tetraacyldisaccharide 1,4'-bis-phosphate (lipid IVA).</text>
</comment>
<comment type="catalytic activity">
    <reaction evidence="1">
        <text>a lipid A disaccharide + ATP = a lipid IVA + ADP + H(+)</text>
        <dbReference type="Rhea" id="RHEA:67840"/>
        <dbReference type="ChEBI" id="CHEBI:15378"/>
        <dbReference type="ChEBI" id="CHEBI:30616"/>
        <dbReference type="ChEBI" id="CHEBI:176343"/>
        <dbReference type="ChEBI" id="CHEBI:176425"/>
        <dbReference type="ChEBI" id="CHEBI:456216"/>
        <dbReference type="EC" id="2.7.1.130"/>
    </reaction>
</comment>
<comment type="pathway">
    <text evidence="1">Glycolipid biosynthesis; lipid IV(A) biosynthesis; lipid IV(A) from (3R)-3-hydroxytetradecanoyl-[acyl-carrier-protein] and UDP-N-acetyl-alpha-D-glucosamine: step 6/6.</text>
</comment>
<comment type="similarity">
    <text evidence="1">Belongs to the LpxK family.</text>
</comment>
<sequence>MKSDKPFLERYFYTPTLLQKGLIFALYPFSLIYQCIATFKRKTAKKHDFKIPIISVGNLIAGGSGKTPFILEIAPRYQEVAIISRGYQRNSKGLVVVSVKGKILVSQNTAGDEAYLLALNLKQASVIVSEKRELGILKALELGSKIVFLDDGFRFNFNQFNLLLKPKVPPYYPFCLPSGLYRESIKSYKEAHLVITEDKDYKRITSTTHPTKRMLLVTAIANPSRLNAFLPKEVVKKIYFKDHAPFNLKLLEKEFHKNNATSLLVTSKDLVKLQDCKLPLSVLDLRLEIDPKVLEKIDNYIFSYPYNTKEHL</sequence>
<gene>
    <name evidence="1" type="primary">lpxK</name>
    <name type="ordered locus">Hac_0992</name>
</gene>
<keyword id="KW-0067">ATP-binding</keyword>
<keyword id="KW-0418">Kinase</keyword>
<keyword id="KW-0441">Lipid A biosynthesis</keyword>
<keyword id="KW-0444">Lipid biosynthesis</keyword>
<keyword id="KW-0443">Lipid metabolism</keyword>
<keyword id="KW-0547">Nucleotide-binding</keyword>
<keyword id="KW-0808">Transferase</keyword>
<reference key="1">
    <citation type="journal article" date="2006" name="PLoS Genet.">
        <title>Who ate whom? Adaptive Helicobacter genomic changes that accompanied a host jump from early humans to large felines.</title>
        <authorList>
            <person name="Eppinger M."/>
            <person name="Baar C."/>
            <person name="Linz B."/>
            <person name="Raddatz G."/>
            <person name="Lanz C."/>
            <person name="Keller H."/>
            <person name="Morelli G."/>
            <person name="Gressmann H."/>
            <person name="Achtman M."/>
            <person name="Schuster S.C."/>
        </authorList>
    </citation>
    <scope>NUCLEOTIDE SEQUENCE [LARGE SCALE GENOMIC DNA]</scope>
    <source>
        <strain>Sheeba</strain>
    </source>
</reference>
<accession>Q17X64</accession>
<name>LPXK_HELAH</name>
<evidence type="ECO:0000255" key="1">
    <source>
        <dbReference type="HAMAP-Rule" id="MF_00409"/>
    </source>
</evidence>